<keyword id="KW-0687">Ribonucleoprotein</keyword>
<keyword id="KW-0689">Ribosomal protein</keyword>
<keyword id="KW-0694">RNA-binding</keyword>
<keyword id="KW-0699">rRNA-binding</keyword>
<evidence type="ECO:0000255" key="1">
    <source>
        <dbReference type="HAMAP-Rule" id="MF_00382"/>
    </source>
</evidence>
<evidence type="ECO:0000305" key="2"/>
<feature type="chain" id="PRO_0000355474" description="Large ribosomal subunit protein bL20">
    <location>
        <begin position="1"/>
        <end position="131"/>
    </location>
</feature>
<gene>
    <name evidence="1" type="primary">rplT</name>
    <name type="ordered locus">MAV_3125</name>
</gene>
<name>RL20_MYCA1</name>
<reference key="1">
    <citation type="submission" date="2006-10" db="EMBL/GenBank/DDBJ databases">
        <authorList>
            <person name="Fleischmann R.D."/>
            <person name="Dodson R.J."/>
            <person name="Haft D.H."/>
            <person name="Merkel J.S."/>
            <person name="Nelson W.C."/>
            <person name="Fraser C.M."/>
        </authorList>
    </citation>
    <scope>NUCLEOTIDE SEQUENCE [LARGE SCALE GENOMIC DNA]</scope>
    <source>
        <strain>104</strain>
    </source>
</reference>
<protein>
    <recommendedName>
        <fullName evidence="1">Large ribosomal subunit protein bL20</fullName>
    </recommendedName>
    <alternativeName>
        <fullName evidence="2">50S ribosomal protein L20</fullName>
    </alternativeName>
</protein>
<dbReference type="EMBL" id="CP000479">
    <property type="protein sequence ID" value="ABK64734.1"/>
    <property type="status" value="ALT_INIT"/>
    <property type="molecule type" value="Genomic_DNA"/>
</dbReference>
<dbReference type="RefSeq" id="WP_003876268.1">
    <property type="nucleotide sequence ID" value="NC_008595.1"/>
</dbReference>
<dbReference type="SMR" id="A0QHC1"/>
<dbReference type="GeneID" id="75270527"/>
<dbReference type="KEGG" id="mav:MAV_3125"/>
<dbReference type="HOGENOM" id="CLU_123265_0_0_11"/>
<dbReference type="Proteomes" id="UP000001574">
    <property type="component" value="Chromosome"/>
</dbReference>
<dbReference type="GO" id="GO:1990904">
    <property type="term" value="C:ribonucleoprotein complex"/>
    <property type="evidence" value="ECO:0007669"/>
    <property type="project" value="UniProtKB-KW"/>
</dbReference>
<dbReference type="GO" id="GO:0005840">
    <property type="term" value="C:ribosome"/>
    <property type="evidence" value="ECO:0007669"/>
    <property type="project" value="UniProtKB-KW"/>
</dbReference>
<dbReference type="GO" id="GO:0019843">
    <property type="term" value="F:rRNA binding"/>
    <property type="evidence" value="ECO:0007669"/>
    <property type="project" value="UniProtKB-UniRule"/>
</dbReference>
<dbReference type="GO" id="GO:0003735">
    <property type="term" value="F:structural constituent of ribosome"/>
    <property type="evidence" value="ECO:0007669"/>
    <property type="project" value="InterPro"/>
</dbReference>
<dbReference type="GO" id="GO:0000027">
    <property type="term" value="P:ribosomal large subunit assembly"/>
    <property type="evidence" value="ECO:0007669"/>
    <property type="project" value="UniProtKB-UniRule"/>
</dbReference>
<dbReference type="GO" id="GO:0006412">
    <property type="term" value="P:translation"/>
    <property type="evidence" value="ECO:0007669"/>
    <property type="project" value="InterPro"/>
</dbReference>
<dbReference type="CDD" id="cd07026">
    <property type="entry name" value="Ribosomal_L20"/>
    <property type="match status" value="1"/>
</dbReference>
<dbReference type="FunFam" id="1.10.1900.20:FF:000001">
    <property type="entry name" value="50S ribosomal protein L20"/>
    <property type="match status" value="1"/>
</dbReference>
<dbReference type="Gene3D" id="6.10.160.10">
    <property type="match status" value="1"/>
</dbReference>
<dbReference type="Gene3D" id="1.10.1900.20">
    <property type="entry name" value="Ribosomal protein L20"/>
    <property type="match status" value="1"/>
</dbReference>
<dbReference type="HAMAP" id="MF_00382">
    <property type="entry name" value="Ribosomal_bL20"/>
    <property type="match status" value="1"/>
</dbReference>
<dbReference type="InterPro" id="IPR005813">
    <property type="entry name" value="Ribosomal_bL20"/>
</dbReference>
<dbReference type="InterPro" id="IPR049946">
    <property type="entry name" value="RIBOSOMAL_L20_CS"/>
</dbReference>
<dbReference type="InterPro" id="IPR035566">
    <property type="entry name" value="Ribosomal_protein_bL20_C"/>
</dbReference>
<dbReference type="NCBIfam" id="TIGR01032">
    <property type="entry name" value="rplT_bact"/>
    <property type="match status" value="1"/>
</dbReference>
<dbReference type="PANTHER" id="PTHR10986">
    <property type="entry name" value="39S RIBOSOMAL PROTEIN L20"/>
    <property type="match status" value="1"/>
</dbReference>
<dbReference type="Pfam" id="PF00453">
    <property type="entry name" value="Ribosomal_L20"/>
    <property type="match status" value="1"/>
</dbReference>
<dbReference type="PRINTS" id="PR00062">
    <property type="entry name" value="RIBOSOMALL20"/>
</dbReference>
<dbReference type="SUPFAM" id="SSF74731">
    <property type="entry name" value="Ribosomal protein L20"/>
    <property type="match status" value="1"/>
</dbReference>
<dbReference type="PROSITE" id="PS00937">
    <property type="entry name" value="RIBOSOMAL_L20"/>
    <property type="match status" value="1"/>
</dbReference>
<sequence>MARVKRAVNAHKKRRSILKASKGYRGQRSRLYRKAKEQQLHSLNYAYRDRRARKGEFRKLWISRINAAARANDITYNRLIQGLKAAGVEVDRKNLADIAIADPAAFTALVDVARAALPEDVNAPSDSGEAA</sequence>
<proteinExistence type="inferred from homology"/>
<organism>
    <name type="scientific">Mycobacterium avium (strain 104)</name>
    <dbReference type="NCBI Taxonomy" id="243243"/>
    <lineage>
        <taxon>Bacteria</taxon>
        <taxon>Bacillati</taxon>
        <taxon>Actinomycetota</taxon>
        <taxon>Actinomycetes</taxon>
        <taxon>Mycobacteriales</taxon>
        <taxon>Mycobacteriaceae</taxon>
        <taxon>Mycobacterium</taxon>
        <taxon>Mycobacterium avium complex (MAC)</taxon>
    </lineage>
</organism>
<accession>A0QHC1</accession>
<comment type="function">
    <text evidence="1">Binds directly to 23S ribosomal RNA and is necessary for the in vitro assembly process of the 50S ribosomal subunit. It is not involved in the protein synthesizing functions of that subunit.</text>
</comment>
<comment type="similarity">
    <text evidence="1">Belongs to the bacterial ribosomal protein bL20 family.</text>
</comment>
<comment type="sequence caution" evidence="2">
    <conflict type="erroneous initiation">
        <sequence resource="EMBL-CDS" id="ABK64734"/>
    </conflict>
</comment>